<name>BAMO_GLYUR</name>
<feature type="chain" id="PRO_0000418848" description="Beta-amyrin 11-oxidase">
    <location>
        <begin position="1"/>
        <end position="493"/>
    </location>
</feature>
<feature type="transmembrane region" description="Helical" evidence="2">
    <location>
        <begin position="7"/>
        <end position="23"/>
    </location>
</feature>
<feature type="binding site" description="axial binding residue" evidence="1">
    <location>
        <position position="439"/>
    </location>
    <ligand>
        <name>heme</name>
        <dbReference type="ChEBI" id="CHEBI:30413"/>
    </ligand>
    <ligandPart>
        <name>Fe</name>
        <dbReference type="ChEBI" id="CHEBI:18248"/>
    </ligandPart>
</feature>
<feature type="sequence conflict" description="In Ref. 2; AQQ13664." evidence="7" ref="2">
    <original>S</original>
    <variation>C</variation>
    <location>
        <position position="9"/>
    </location>
</feature>
<feature type="sequence conflict" description="In Ref. 2; AQQ13664." evidence="7" ref="2">
    <original>IGD</original>
    <variation>MGN</variation>
    <location>
        <begin position="53"/>
        <end position="55"/>
    </location>
</feature>
<feature type="sequence conflict" description="In Ref. 2; AQQ13664." evidence="7" ref="2">
    <original>PQEGS</original>
    <variation>QQEGD</variation>
    <location>
        <begin position="262"/>
        <end position="266"/>
    </location>
</feature>
<feature type="sequence conflict" description="In Ref. 2; AQQ13664." evidence="7" ref="2">
    <original>TRTRF</original>
    <variation>MRTRL</variation>
    <location>
        <begin position="335"/>
        <end position="339"/>
    </location>
</feature>
<feature type="sequence conflict" description="In Ref. 2; AQQ13664." evidence="7" ref="2">
    <original>L</original>
    <variation>F</variation>
    <location>
        <position position="347"/>
    </location>
</feature>
<feature type="sequence conflict" description="In Ref. 2; AQQ13664." evidence="7" ref="2">
    <original>R</original>
    <variation>L</variation>
    <location>
        <position position="458"/>
    </location>
</feature>
<feature type="sequence conflict" description="In Ref. 2; AQQ13664." evidence="7" ref="2">
    <original>I</original>
    <variation>V</variation>
    <location>
        <position position="465"/>
    </location>
</feature>
<feature type="sequence conflict" description="In Ref. 2; AQQ13664." evidence="7" ref="2">
    <original>I</original>
    <variation>M</variation>
    <location>
        <position position="488"/>
    </location>
</feature>
<organism>
    <name type="scientific">Glycyrrhiza uralensis</name>
    <name type="common">Chinese licorice</name>
    <name type="synonym">Glycyrrhiza shiheziensis</name>
    <dbReference type="NCBI Taxonomy" id="74613"/>
    <lineage>
        <taxon>Eukaryota</taxon>
        <taxon>Viridiplantae</taxon>
        <taxon>Streptophyta</taxon>
        <taxon>Embryophyta</taxon>
        <taxon>Tracheophyta</taxon>
        <taxon>Spermatophyta</taxon>
        <taxon>Magnoliopsida</taxon>
        <taxon>eudicotyledons</taxon>
        <taxon>Gunneridae</taxon>
        <taxon>Pentapetalae</taxon>
        <taxon>rosids</taxon>
        <taxon>fabids</taxon>
        <taxon>Fabales</taxon>
        <taxon>Fabaceae</taxon>
        <taxon>Papilionoideae</taxon>
        <taxon>50 kb inversion clade</taxon>
        <taxon>NPAAA clade</taxon>
        <taxon>Hologalegina</taxon>
        <taxon>IRL clade</taxon>
        <taxon>Galegeae</taxon>
        <taxon>Glycyrrhiza</taxon>
    </lineage>
</organism>
<dbReference type="EC" id="1.14.14.152" evidence="3"/>
<dbReference type="EMBL" id="AB433179">
    <property type="protein sequence ID" value="BAG68929.1"/>
    <property type="molecule type" value="mRNA"/>
</dbReference>
<dbReference type="EMBL" id="KY499143">
    <property type="protein sequence ID" value="AQQ13664.1"/>
    <property type="molecule type" value="mRNA"/>
</dbReference>
<dbReference type="SMR" id="B5BSX1"/>
<dbReference type="KEGG" id="ag:BAG68929"/>
<dbReference type="BioCyc" id="MetaCyc:MONOMER-16879"/>
<dbReference type="GO" id="GO:0005783">
    <property type="term" value="C:endoplasmic reticulum"/>
    <property type="evidence" value="ECO:0007669"/>
    <property type="project" value="TreeGrafter"/>
</dbReference>
<dbReference type="GO" id="GO:0016020">
    <property type="term" value="C:membrane"/>
    <property type="evidence" value="ECO:0007669"/>
    <property type="project" value="UniProtKB-SubCell"/>
</dbReference>
<dbReference type="GO" id="GO:0102289">
    <property type="term" value="F:beta-amyrin 11-oxidase activity"/>
    <property type="evidence" value="ECO:0007669"/>
    <property type="project" value="UniProtKB-EC"/>
</dbReference>
<dbReference type="GO" id="GO:0051777">
    <property type="term" value="F:ent-kaurenoic acid monooxygenase activity"/>
    <property type="evidence" value="ECO:0007669"/>
    <property type="project" value="TreeGrafter"/>
</dbReference>
<dbReference type="GO" id="GO:0020037">
    <property type="term" value="F:heme binding"/>
    <property type="evidence" value="ECO:0007669"/>
    <property type="project" value="InterPro"/>
</dbReference>
<dbReference type="GO" id="GO:0005506">
    <property type="term" value="F:iron ion binding"/>
    <property type="evidence" value="ECO:0007669"/>
    <property type="project" value="InterPro"/>
</dbReference>
<dbReference type="GO" id="GO:0016132">
    <property type="term" value="P:brassinosteroid biosynthetic process"/>
    <property type="evidence" value="ECO:0007669"/>
    <property type="project" value="TreeGrafter"/>
</dbReference>
<dbReference type="GO" id="GO:0010268">
    <property type="term" value="P:brassinosteroid homeostasis"/>
    <property type="evidence" value="ECO:0007669"/>
    <property type="project" value="TreeGrafter"/>
</dbReference>
<dbReference type="GO" id="GO:0016125">
    <property type="term" value="P:sterol metabolic process"/>
    <property type="evidence" value="ECO:0007669"/>
    <property type="project" value="TreeGrafter"/>
</dbReference>
<dbReference type="CDD" id="cd11043">
    <property type="entry name" value="CYP90-like"/>
    <property type="match status" value="1"/>
</dbReference>
<dbReference type="Gene3D" id="1.10.630.10">
    <property type="entry name" value="Cytochrome P450"/>
    <property type="match status" value="1"/>
</dbReference>
<dbReference type="InterPro" id="IPR001128">
    <property type="entry name" value="Cyt_P450"/>
</dbReference>
<dbReference type="InterPro" id="IPR017972">
    <property type="entry name" value="Cyt_P450_CS"/>
</dbReference>
<dbReference type="InterPro" id="IPR002401">
    <property type="entry name" value="Cyt_P450_E_grp-I"/>
</dbReference>
<dbReference type="InterPro" id="IPR036396">
    <property type="entry name" value="Cyt_P450_sf"/>
</dbReference>
<dbReference type="PANTHER" id="PTHR24286">
    <property type="entry name" value="CYTOCHROME P450 26"/>
    <property type="match status" value="1"/>
</dbReference>
<dbReference type="PANTHER" id="PTHR24286:SF199">
    <property type="entry name" value="CYTOCHROME P450 88D6"/>
    <property type="match status" value="1"/>
</dbReference>
<dbReference type="Pfam" id="PF00067">
    <property type="entry name" value="p450"/>
    <property type="match status" value="1"/>
</dbReference>
<dbReference type="PRINTS" id="PR00463">
    <property type="entry name" value="EP450I"/>
</dbReference>
<dbReference type="PRINTS" id="PR00385">
    <property type="entry name" value="P450"/>
</dbReference>
<dbReference type="SUPFAM" id="SSF48264">
    <property type="entry name" value="Cytochrome P450"/>
    <property type="match status" value="1"/>
</dbReference>
<dbReference type="PROSITE" id="PS00086">
    <property type="entry name" value="CYTOCHROME_P450"/>
    <property type="match status" value="1"/>
</dbReference>
<proteinExistence type="evidence at protein level"/>
<keyword id="KW-0349">Heme</keyword>
<keyword id="KW-0408">Iron</keyword>
<keyword id="KW-0472">Membrane</keyword>
<keyword id="KW-0479">Metal-binding</keyword>
<keyword id="KW-0503">Monooxygenase</keyword>
<keyword id="KW-0560">Oxidoreductase</keyword>
<keyword id="KW-0812">Transmembrane</keyword>
<keyword id="KW-1133">Transmembrane helix</keyword>
<gene>
    <name evidence="5 6" type="primary">CYP88D6</name>
</gene>
<comment type="function">
    <text evidence="3 4">Involved in the biosynthesis of Glycyrrhetinic acid (GA), a natural product which exhibits anti-inflammatory activity (PubMed:31138208). Catalyzes 2 successive oxidations of beta-amyrin, producing a precursor of the triterpene sweetener glycyrrhizin (PubMed:18779566). Unable to use 11-deoxoglycyrrhetinic acid or ent-kaurenoic acid as substrates (PubMed:18779566).</text>
</comment>
<comment type="catalytic activity">
    <reaction evidence="3">
        <text>beta-amyrin + 2 reduced [NADPH--hemoprotein reductase] + 2 O2 = 11-oxo-beta-amyrin + 2 oxidized [NADPH--hemoprotein reductase] + 3 H2O + 2 H(+)</text>
        <dbReference type="Rhea" id="RHEA:31711"/>
        <dbReference type="Rhea" id="RHEA-COMP:11964"/>
        <dbReference type="Rhea" id="RHEA-COMP:11965"/>
        <dbReference type="ChEBI" id="CHEBI:10352"/>
        <dbReference type="ChEBI" id="CHEBI:15377"/>
        <dbReference type="ChEBI" id="CHEBI:15378"/>
        <dbReference type="ChEBI" id="CHEBI:15379"/>
        <dbReference type="ChEBI" id="CHEBI:57618"/>
        <dbReference type="ChEBI" id="CHEBI:58210"/>
        <dbReference type="ChEBI" id="CHEBI:63184"/>
        <dbReference type="EC" id="1.14.14.152"/>
    </reaction>
</comment>
<comment type="catalytic activity">
    <reaction evidence="3">
        <text>beta-amyrin + reduced [NADPH--hemoprotein reductase] + O2 = 11alpha-hydroxy-beta-amyrin + oxidized [NADPH--hemoprotein reductase] + H2O + H(+)</text>
        <dbReference type="Rhea" id="RHEA:31715"/>
        <dbReference type="Rhea" id="RHEA-COMP:11964"/>
        <dbReference type="Rhea" id="RHEA-COMP:11965"/>
        <dbReference type="ChEBI" id="CHEBI:10352"/>
        <dbReference type="ChEBI" id="CHEBI:15377"/>
        <dbReference type="ChEBI" id="CHEBI:15378"/>
        <dbReference type="ChEBI" id="CHEBI:15379"/>
        <dbReference type="ChEBI" id="CHEBI:57618"/>
        <dbReference type="ChEBI" id="CHEBI:58210"/>
        <dbReference type="ChEBI" id="CHEBI:63177"/>
    </reaction>
</comment>
<comment type="catalytic activity">
    <reaction evidence="3">
        <text>11alpha-hydroxy-beta-amyrin + reduced [NADPH--hemoprotein reductase] + O2 = 11-oxo-beta-amyrin + oxidized [NADPH--hemoprotein reductase] + 2 H2O + H(+)</text>
        <dbReference type="Rhea" id="RHEA:31719"/>
        <dbReference type="Rhea" id="RHEA-COMP:11964"/>
        <dbReference type="Rhea" id="RHEA-COMP:11965"/>
        <dbReference type="ChEBI" id="CHEBI:15377"/>
        <dbReference type="ChEBI" id="CHEBI:15378"/>
        <dbReference type="ChEBI" id="CHEBI:15379"/>
        <dbReference type="ChEBI" id="CHEBI:57618"/>
        <dbReference type="ChEBI" id="CHEBI:58210"/>
        <dbReference type="ChEBI" id="CHEBI:63177"/>
        <dbReference type="ChEBI" id="CHEBI:63184"/>
    </reaction>
</comment>
<comment type="cofactor">
    <cofactor evidence="1">
        <name>heme</name>
        <dbReference type="ChEBI" id="CHEBI:30413"/>
    </cofactor>
</comment>
<comment type="subcellular location">
    <subcellularLocation>
        <location evidence="7">Membrane</location>
        <topology evidence="7">Single-pass membrane protein</topology>
    </subcellularLocation>
</comment>
<comment type="tissue specificity">
    <text evidence="3">Expressed in roots and stolons. Not detected in leaves and stems.</text>
</comment>
<comment type="biotechnology">
    <text evidence="4">Saccharomyces cerevisiae expressing Glycyrrhiza uralensis CYP88D6 and CYP72A154, combined with the expression of Arabidopsis thaliana beta-amyrin synthase (beta-AS) and NADPH-cytochrome P450 reductase 1 (ATR1), accumulates glycyrrhetinic acid (GA) and, to lower levels, beta-amyrin; these GA production was increased in the presence of G.uralensis cytochrome b5 (GuCYB5).</text>
</comment>
<comment type="miscellaneous">
    <text>The CYP88D subfamily seems to be restricted to the Fabaceae.</text>
</comment>
<comment type="similarity">
    <text evidence="7">Belongs to the cytochrome P450 family.</text>
</comment>
<sequence length="493" mass="56372">MEVHWVCMSAATLLVCYIFGSKFVRNLNGWYYDVKLRRKEHPLPPGDMGWPLIGDLLSFIKDFSSGHPDSFINNLVLKYGRSGIYKTHLFGNPSIIVCEPQMCRRVLTDDVNFKLGYPKSIKELARCRPMIDVSNAEHRLFRRLITSPIVGHKALAMYLERLEEIVINSLEELSSMKHPVELLKEMKKVSFKAIVHVFMGSSNQDIIKKIGSSFTDLYNGMFSIPINVPGFTFHKALEARKKLAKIVQPVVDERRLMIENGPQEGSQRKDLIDILLEVKDENGRKLEDEDISDLLIGLLFAGHESTATSLMWSITYLTQHPHILKKAKEEQEEITRTRFSSQKQLSLKEIKQMVYLSQVIDETLRCANIAFATFREATADVNINGYIIPKGWRVLIWARAIHMDSEYYPNPEEFNPSRWDDYNAKAGTFLPFGAGSRLCPGADLAKLEISIFLHYFLRNYRLERINPECHVTSLPVSKPTDNCLAKVIKVSCA</sequence>
<evidence type="ECO:0000250" key="1"/>
<evidence type="ECO:0000255" key="2"/>
<evidence type="ECO:0000269" key="3">
    <source>
    </source>
</evidence>
<evidence type="ECO:0000269" key="4">
    <source>
    </source>
</evidence>
<evidence type="ECO:0000303" key="5">
    <source>
    </source>
</evidence>
<evidence type="ECO:0000303" key="6">
    <source>
    </source>
</evidence>
<evidence type="ECO:0000305" key="7"/>
<protein>
    <recommendedName>
        <fullName evidence="5 6">Beta-amyrin 11-oxidase</fullName>
        <ecNumber evidence="3">1.14.14.152</ecNumber>
    </recommendedName>
    <alternativeName>
        <fullName evidence="5 6">Cytochrome P450 88D6</fullName>
    </alternativeName>
</protein>
<reference key="1">
    <citation type="journal article" date="2008" name="Proc. Natl. Acad. Sci. U.S.A.">
        <title>Licorice beta-amyrin 11-oxidase, a cytochrome P450 with a key role in the biosynthesis of the triterpene sweetener glycyrrhizin.</title>
        <authorList>
            <person name="Seki H."/>
            <person name="Ohyama K."/>
            <person name="Sawai S."/>
            <person name="Mizutani M."/>
            <person name="Ohnishi T."/>
            <person name="Sudo H."/>
            <person name="Akashi T."/>
            <person name="Aoki T."/>
            <person name="Saito K."/>
            <person name="Muranaka T."/>
        </authorList>
    </citation>
    <scope>NUCLEOTIDE SEQUENCE [MRNA]</scope>
    <scope>FUNCTION</scope>
    <scope>CATALYTIC ACTIVITY</scope>
    <scope>TISSUE SPECIFICITY</scope>
</reference>
<reference key="2">
    <citation type="journal article" date="2019" name="Microb. Cell Fact.">
        <title>Efficient production of glycyrrhetinic acid in metabolically engineered Saccharomyces cerevisiae via an integrated strategy.</title>
        <authorList>
            <person name="Wang C."/>
            <person name="Su X."/>
            <person name="Sun M."/>
            <person name="Zhang M."/>
            <person name="Wu J."/>
            <person name="Xing J."/>
            <person name="Wang Y."/>
            <person name="Xue J."/>
            <person name="Liu X."/>
            <person name="Sun W."/>
            <person name="Chen S."/>
        </authorList>
    </citation>
    <scope>NUCLEOTIDE SEQUENCE [MRNA]</scope>
    <scope>FUNCTION</scope>
    <scope>BIOTECHNOLOGY</scope>
    <scope>REVIEW</scope>
</reference>
<accession>B5BSX1</accession>
<accession>A0A218KSA8</accession>